<name>BGL39_ARATH</name>
<comment type="catalytic activity">
    <reaction evidence="1">
        <text>a thioglucoside + H2O = a sugar + a thiol.</text>
        <dbReference type="EC" id="3.2.1.147"/>
    </reaction>
</comment>
<comment type="tissue specificity">
    <text evidence="7">Expressed specifically in stamens and petals.</text>
</comment>
<comment type="similarity">
    <text evidence="10">Belongs to the glycosyl hydrolase 1 family.</text>
</comment>
<comment type="caution">
    <text evidence="10">Could be the product of a pseudogene.</text>
</comment>
<sequence>MKFRALGLVLLLAVETCKAEEITCEETKPFTCNQTDRFNRKHFDDDFIFEGGKGRGLNVWDGFTHRYPEKGGPDLGNGDSTCGSYEHWQKDIDVMTELGVDGYRFSLAWSRIAPRESNQAGVKYYNDLIDGLLAKNITPFVTLFHWDLPQVLQDEYEGFLNHEIIDDFKDYANLCFKIFGDRVKKWITINQLYTVPTRGYAMGTDAPEPYIVAHNQLLAHAKVVHLYRKKYKPKQRGQIGVVMITRWFVPYDSTQANIDATERNKEFFLGWFMEPLTKGKYPDIMRKLVGRRLPKFNKKEAKLVKGSYDFLGINYYQTQYVYAIPANPPNRLTVLNDSLSAFSYENKDGPIGPWFNADSYYHPRGILNVLEHFKTKYGNPLVYITENGELLILSGCNVKGYFAWCLGDNYELWPSRSFHVSPFYLLHRKDKGAFPSFEA</sequence>
<gene>
    <name evidence="8" type="primary">TGG3</name>
    <name evidence="9" type="synonym">BGLU39</name>
    <name evidence="11" type="ordered locus">At5g48375</name>
    <name evidence="12" type="ORF">K23F3</name>
</gene>
<protein>
    <recommendedName>
        <fullName evidence="1">Putative myrosinase 3</fullName>
        <ecNumber evidence="1">3.2.1.147</ecNumber>
    </recommendedName>
    <alternativeName>
        <fullName evidence="9">Beta-glucosidase 39</fullName>
        <shortName evidence="9">AtBGLU39</shortName>
    </alternativeName>
    <alternativeName>
        <fullName evidence="1">Sinigrinase 3</fullName>
    </alternativeName>
    <alternativeName>
        <fullName evidence="8">Thioglucosidase 3</fullName>
    </alternativeName>
</protein>
<dbReference type="EC" id="3.2.1.147" evidence="1"/>
<dbReference type="EMBL" id="AP000372">
    <property type="status" value="NOT_ANNOTATED_CDS"/>
    <property type="molecule type" value="Genomic_DNA"/>
</dbReference>
<dbReference type="EMBL" id="CP002688">
    <property type="protein sequence ID" value="AED95661.1"/>
    <property type="molecule type" value="Genomic_DNA"/>
</dbReference>
<dbReference type="RefSeq" id="NP_680406.1">
    <property type="nucleotide sequence ID" value="NM_148101.1"/>
</dbReference>
<dbReference type="SMR" id="Q3E8E5"/>
<dbReference type="BioGRID" id="20137">
    <property type="interactions" value="1"/>
</dbReference>
<dbReference type="FunCoup" id="Q3E8E5">
    <property type="interactions" value="46"/>
</dbReference>
<dbReference type="STRING" id="3702.Q3E8E5"/>
<dbReference type="CAZy" id="GH1">
    <property type="family name" value="Glycoside Hydrolase Family 1"/>
</dbReference>
<dbReference type="GlyCosmos" id="Q3E8E5">
    <property type="glycosylation" value="2 sites, No reported glycans"/>
</dbReference>
<dbReference type="GlyGen" id="Q3E8E5">
    <property type="glycosylation" value="2 sites"/>
</dbReference>
<dbReference type="iPTMnet" id="Q3E8E5"/>
<dbReference type="PaxDb" id="3702-AT5G48375.1"/>
<dbReference type="ProteomicsDB" id="240688"/>
<dbReference type="EnsemblPlants" id="AT5G48375.1">
    <property type="protein sequence ID" value="AT5G48375.1"/>
    <property type="gene ID" value="AT5G48375"/>
</dbReference>
<dbReference type="GeneID" id="834891"/>
<dbReference type="Gramene" id="AT5G48375.1">
    <property type="protein sequence ID" value="AT5G48375.1"/>
    <property type="gene ID" value="AT5G48375"/>
</dbReference>
<dbReference type="KEGG" id="ath:AT5G48375"/>
<dbReference type="Araport" id="AT5G48375"/>
<dbReference type="TAIR" id="AT5G48375">
    <property type="gene designation" value="TGG3"/>
</dbReference>
<dbReference type="eggNOG" id="KOG0626">
    <property type="taxonomic scope" value="Eukaryota"/>
</dbReference>
<dbReference type="HOGENOM" id="CLU_001859_1_0_1"/>
<dbReference type="InParanoid" id="Q3E8E5"/>
<dbReference type="OMA" id="GVVMITR"/>
<dbReference type="PhylomeDB" id="Q3E8E5"/>
<dbReference type="BioCyc" id="ARA:AT5G48375-MONOMER"/>
<dbReference type="CD-CODE" id="4299E36E">
    <property type="entry name" value="Nucleolus"/>
</dbReference>
<dbReference type="Proteomes" id="UP000006548">
    <property type="component" value="Chromosome 5"/>
</dbReference>
<dbReference type="ExpressionAtlas" id="Q3E8E5">
    <property type="expression patterns" value="baseline and differential"/>
</dbReference>
<dbReference type="GO" id="GO:0009536">
    <property type="term" value="C:plastid"/>
    <property type="evidence" value="ECO:0007005"/>
    <property type="project" value="TAIR"/>
</dbReference>
<dbReference type="GO" id="GO:0099503">
    <property type="term" value="C:secretory vesicle"/>
    <property type="evidence" value="ECO:0007005"/>
    <property type="project" value="TAIR"/>
</dbReference>
<dbReference type="GO" id="GO:0019137">
    <property type="term" value="F:thioglucosidase activity"/>
    <property type="evidence" value="ECO:0000314"/>
    <property type="project" value="TAIR"/>
</dbReference>
<dbReference type="GO" id="GO:0005975">
    <property type="term" value="P:carbohydrate metabolic process"/>
    <property type="evidence" value="ECO:0007669"/>
    <property type="project" value="InterPro"/>
</dbReference>
<dbReference type="FunFam" id="3.20.20.80:FF:000041">
    <property type="entry name" value="Beta-glucosidase 7"/>
    <property type="match status" value="1"/>
</dbReference>
<dbReference type="Gene3D" id="3.20.20.80">
    <property type="entry name" value="Glycosidases"/>
    <property type="match status" value="1"/>
</dbReference>
<dbReference type="InterPro" id="IPR001360">
    <property type="entry name" value="Glyco_hydro_1"/>
</dbReference>
<dbReference type="InterPro" id="IPR017853">
    <property type="entry name" value="Glycoside_hydrolase_SF"/>
</dbReference>
<dbReference type="PANTHER" id="PTHR10353">
    <property type="entry name" value="GLYCOSYL HYDROLASE"/>
    <property type="match status" value="1"/>
</dbReference>
<dbReference type="PANTHER" id="PTHR10353:SF137">
    <property type="entry name" value="MYROSINASE 3-RELATED"/>
    <property type="match status" value="1"/>
</dbReference>
<dbReference type="Pfam" id="PF00232">
    <property type="entry name" value="Glyco_hydro_1"/>
    <property type="match status" value="1"/>
</dbReference>
<dbReference type="PRINTS" id="PR00131">
    <property type="entry name" value="GLHYDRLASE1"/>
</dbReference>
<dbReference type="SUPFAM" id="SSF51445">
    <property type="entry name" value="(Trans)glycosidases"/>
    <property type="match status" value="1"/>
</dbReference>
<feature type="signal peptide" evidence="5">
    <location>
        <begin position="1"/>
        <end position="19"/>
    </location>
</feature>
<feature type="chain" id="PRO_0000390312" description="Putative myrosinase 3">
    <location>
        <begin position="20"/>
        <end position="439"/>
    </location>
</feature>
<feature type="active site" description="Nucleophile" evidence="2">
    <location>
        <position position="386"/>
    </location>
</feature>
<feature type="binding site" evidence="2">
    <location>
        <position position="145"/>
    </location>
    <ligand>
        <name>a beta-D-glucoside</name>
        <dbReference type="ChEBI" id="CHEBI:22798"/>
    </ligand>
</feature>
<feature type="binding site" evidence="3">
    <location>
        <begin position="190"/>
        <end position="191"/>
    </location>
    <ligand>
        <name>a beta-D-glucoside</name>
        <dbReference type="ChEBI" id="CHEBI:22798"/>
    </ligand>
</feature>
<feature type="binding site" evidence="2">
    <location>
        <position position="316"/>
    </location>
    <ligand>
        <name>a beta-D-glucoside</name>
        <dbReference type="ChEBI" id="CHEBI:22798"/>
    </ligand>
</feature>
<feature type="binding site" evidence="4">
    <location>
        <position position="386"/>
    </location>
    <ligand>
        <name>a beta-D-glucoside</name>
        <dbReference type="ChEBI" id="CHEBI:22798"/>
    </ligand>
</feature>
<feature type="binding site" evidence="2">
    <location>
        <position position="404"/>
    </location>
    <ligand>
        <name>a beta-D-glucoside</name>
        <dbReference type="ChEBI" id="CHEBI:22798"/>
    </ligand>
</feature>
<feature type="glycosylation site" description="N-linked (GlcNAc...) asparagine" evidence="6">
    <location>
        <position position="33"/>
    </location>
</feature>
<feature type="glycosylation site" description="N-linked (GlcNAc...) asparagine" evidence="6">
    <location>
        <position position="336"/>
    </location>
</feature>
<accession>Q3E8E5</accession>
<keyword id="KW-0325">Glycoprotein</keyword>
<keyword id="KW-0326">Glycosidase</keyword>
<keyword id="KW-0378">Hydrolase</keyword>
<keyword id="KW-1185">Reference proteome</keyword>
<keyword id="KW-0732">Signal</keyword>
<evidence type="ECO:0000250" key="1">
    <source>
        <dbReference type="UniProtKB" id="Q3ECS3"/>
    </source>
</evidence>
<evidence type="ECO:0000250" key="2">
    <source>
        <dbReference type="UniProtKB" id="Q7XSK0"/>
    </source>
</evidence>
<evidence type="ECO:0000250" key="3">
    <source>
        <dbReference type="UniProtKB" id="Q8GU20"/>
    </source>
</evidence>
<evidence type="ECO:0000250" key="4">
    <source>
        <dbReference type="UniProtKB" id="Q9SPP9"/>
    </source>
</evidence>
<evidence type="ECO:0000255" key="5"/>
<evidence type="ECO:0000255" key="6">
    <source>
        <dbReference type="PROSITE-ProRule" id="PRU00498"/>
    </source>
</evidence>
<evidence type="ECO:0000269" key="7">
    <source>
    </source>
</evidence>
<evidence type="ECO:0000303" key="8">
    <source>
    </source>
</evidence>
<evidence type="ECO:0000303" key="9">
    <source>
    </source>
</evidence>
<evidence type="ECO:0000305" key="10"/>
<evidence type="ECO:0000312" key="11">
    <source>
        <dbReference type="Araport" id="AT5G48375"/>
    </source>
</evidence>
<evidence type="ECO:0000312" key="12">
    <source>
        <dbReference type="EMBL" id="AP000372"/>
    </source>
</evidence>
<organism>
    <name type="scientific">Arabidopsis thaliana</name>
    <name type="common">Mouse-ear cress</name>
    <dbReference type="NCBI Taxonomy" id="3702"/>
    <lineage>
        <taxon>Eukaryota</taxon>
        <taxon>Viridiplantae</taxon>
        <taxon>Streptophyta</taxon>
        <taxon>Embryophyta</taxon>
        <taxon>Tracheophyta</taxon>
        <taxon>Spermatophyta</taxon>
        <taxon>Magnoliopsida</taxon>
        <taxon>eudicotyledons</taxon>
        <taxon>Gunneridae</taxon>
        <taxon>Pentapetalae</taxon>
        <taxon>rosids</taxon>
        <taxon>malvids</taxon>
        <taxon>Brassicales</taxon>
        <taxon>Brassicaceae</taxon>
        <taxon>Camelineae</taxon>
        <taxon>Arabidopsis</taxon>
    </lineage>
</organism>
<reference key="1">
    <citation type="submission" date="1999-07" db="EMBL/GenBank/DDBJ databases">
        <title>Structural analysis of Arabidopsis thaliana chromosome 5. XI.</title>
        <authorList>
            <person name="Kaneko T."/>
            <person name="Katoh T."/>
            <person name="Asamizu E."/>
            <person name="Sato S."/>
            <person name="Nakamura Y."/>
            <person name="Kotani H."/>
            <person name="Tabata S."/>
        </authorList>
    </citation>
    <scope>NUCLEOTIDE SEQUENCE [LARGE SCALE GENOMIC DNA]</scope>
    <source>
        <strain>cv. Columbia</strain>
    </source>
</reference>
<reference key="2">
    <citation type="journal article" date="2017" name="Plant J.">
        <title>Araport11: a complete reannotation of the Arabidopsis thaliana reference genome.</title>
        <authorList>
            <person name="Cheng C.Y."/>
            <person name="Krishnakumar V."/>
            <person name="Chan A.P."/>
            <person name="Thibaud-Nissen F."/>
            <person name="Schobel S."/>
            <person name="Town C.D."/>
        </authorList>
    </citation>
    <scope>GENOME REANNOTATION</scope>
    <source>
        <strain>cv. Columbia</strain>
    </source>
</reference>
<reference key="3">
    <citation type="journal article" date="2002" name="Physiol. Plantarum">
        <title>The third myrosinase gene TGG3 in Arabidopsis thaliana is a pseudogene specifically expressed in stamen and petal.</title>
        <authorList>
            <person name="Zhang J."/>
            <person name="Pontoppidan B."/>
            <person name="Xue J."/>
            <person name="Rask L."/>
            <person name="Meijer J."/>
        </authorList>
    </citation>
    <scope>TISSUE SPECIFICITY</scope>
</reference>
<reference key="4">
    <citation type="journal article" date="2004" name="Plant Mol. Biol.">
        <title>Functional genomic analysis of Arabidopsis thaliana glycoside hydrolase family 1.</title>
        <authorList>
            <person name="Xu Z."/>
            <person name="Escamilla-Trevino L.L."/>
            <person name="Zeng L."/>
            <person name="Lalgondar M."/>
            <person name="Bevan D.R."/>
            <person name="Winkel B.S.J."/>
            <person name="Mohamed A."/>
            <person name="Cheng C.-L."/>
            <person name="Shih M.-C."/>
            <person name="Poulton J.E."/>
            <person name="Esen A."/>
        </authorList>
    </citation>
    <scope>GENE FAMILY</scope>
    <scope>NOMENCLATURE</scope>
</reference>
<proteinExistence type="uncertain"/>